<gene>
    <name evidence="1" type="primary">engB</name>
    <name type="ordered locus">CGSHiEE_06460</name>
</gene>
<reference key="1">
    <citation type="journal article" date="2007" name="Genome Biol.">
        <title>Characterization and modeling of the Haemophilus influenzae core and supragenomes based on the complete genomic sequences of Rd and 12 clinical nontypeable strains.</title>
        <authorList>
            <person name="Hogg J.S."/>
            <person name="Hu F.Z."/>
            <person name="Janto B."/>
            <person name="Boissy R."/>
            <person name="Hayes J."/>
            <person name="Keefe R."/>
            <person name="Post J.C."/>
            <person name="Ehrlich G.D."/>
        </authorList>
    </citation>
    <scope>NUCLEOTIDE SEQUENCE [LARGE SCALE GENOMIC DNA]</scope>
    <source>
        <strain>PittEE</strain>
    </source>
</reference>
<keyword id="KW-0131">Cell cycle</keyword>
<keyword id="KW-0132">Cell division</keyword>
<keyword id="KW-0342">GTP-binding</keyword>
<keyword id="KW-0460">Magnesium</keyword>
<keyword id="KW-0479">Metal-binding</keyword>
<keyword id="KW-0547">Nucleotide-binding</keyword>
<keyword id="KW-0717">Septation</keyword>
<feature type="chain" id="PRO_1000005816" description="Probable GTP-binding protein EngB">
    <location>
        <begin position="1"/>
        <end position="205"/>
    </location>
</feature>
<feature type="domain" description="EngB-type G" evidence="1">
    <location>
        <begin position="27"/>
        <end position="201"/>
    </location>
</feature>
<feature type="binding site" evidence="1">
    <location>
        <begin position="35"/>
        <end position="42"/>
    </location>
    <ligand>
        <name>GTP</name>
        <dbReference type="ChEBI" id="CHEBI:37565"/>
    </ligand>
</feature>
<feature type="binding site" evidence="1">
    <location>
        <position position="42"/>
    </location>
    <ligand>
        <name>Mg(2+)</name>
        <dbReference type="ChEBI" id="CHEBI:18420"/>
    </ligand>
</feature>
<feature type="binding site" evidence="1">
    <location>
        <begin position="62"/>
        <end position="66"/>
    </location>
    <ligand>
        <name>GTP</name>
        <dbReference type="ChEBI" id="CHEBI:37565"/>
    </ligand>
</feature>
<feature type="binding site" evidence="1">
    <location>
        <position position="64"/>
    </location>
    <ligand>
        <name>Mg(2+)</name>
        <dbReference type="ChEBI" id="CHEBI:18420"/>
    </ligand>
</feature>
<feature type="binding site" evidence="1">
    <location>
        <begin position="80"/>
        <end position="83"/>
    </location>
    <ligand>
        <name>GTP</name>
        <dbReference type="ChEBI" id="CHEBI:37565"/>
    </ligand>
</feature>
<feature type="binding site" evidence="1">
    <location>
        <begin position="147"/>
        <end position="150"/>
    </location>
    <ligand>
        <name>GTP</name>
        <dbReference type="ChEBI" id="CHEBI:37565"/>
    </ligand>
</feature>
<feature type="binding site" evidence="1">
    <location>
        <begin position="180"/>
        <end position="182"/>
    </location>
    <ligand>
        <name>GTP</name>
        <dbReference type="ChEBI" id="CHEBI:37565"/>
    </ligand>
</feature>
<accession>A5UCY6</accession>
<name>ENGB_HAEIE</name>
<protein>
    <recommendedName>
        <fullName evidence="1">Probable GTP-binding protein EngB</fullName>
    </recommendedName>
</protein>
<comment type="function">
    <text evidence="1">Necessary for normal cell division and for the maintenance of normal septation.</text>
</comment>
<comment type="cofactor">
    <cofactor evidence="1">
        <name>Mg(2+)</name>
        <dbReference type="ChEBI" id="CHEBI:18420"/>
    </cofactor>
</comment>
<comment type="similarity">
    <text evidence="1">Belongs to the TRAFAC class TrmE-Era-EngA-EngB-Septin-like GTPase superfamily. EngB GTPase family.</text>
</comment>
<organism>
    <name type="scientific">Haemophilus influenzae (strain PittEE)</name>
    <dbReference type="NCBI Taxonomy" id="374930"/>
    <lineage>
        <taxon>Bacteria</taxon>
        <taxon>Pseudomonadati</taxon>
        <taxon>Pseudomonadota</taxon>
        <taxon>Gammaproteobacteria</taxon>
        <taxon>Pasteurellales</taxon>
        <taxon>Pasteurellaceae</taxon>
        <taxon>Haemophilus</taxon>
    </lineage>
</organism>
<proteinExistence type="inferred from homology"/>
<dbReference type="EMBL" id="CP000671">
    <property type="protein sequence ID" value="ABQ98637.1"/>
    <property type="molecule type" value="Genomic_DNA"/>
</dbReference>
<dbReference type="SMR" id="A5UCY6"/>
<dbReference type="KEGG" id="hip:CGSHiEE_06460"/>
<dbReference type="HOGENOM" id="CLU_033732_1_0_6"/>
<dbReference type="GO" id="GO:0005829">
    <property type="term" value="C:cytosol"/>
    <property type="evidence" value="ECO:0007669"/>
    <property type="project" value="TreeGrafter"/>
</dbReference>
<dbReference type="GO" id="GO:0005525">
    <property type="term" value="F:GTP binding"/>
    <property type="evidence" value="ECO:0007669"/>
    <property type="project" value="UniProtKB-UniRule"/>
</dbReference>
<dbReference type="GO" id="GO:0046872">
    <property type="term" value="F:metal ion binding"/>
    <property type="evidence" value="ECO:0007669"/>
    <property type="project" value="UniProtKB-KW"/>
</dbReference>
<dbReference type="GO" id="GO:0000917">
    <property type="term" value="P:division septum assembly"/>
    <property type="evidence" value="ECO:0007669"/>
    <property type="project" value="UniProtKB-KW"/>
</dbReference>
<dbReference type="CDD" id="cd01876">
    <property type="entry name" value="YihA_EngB"/>
    <property type="match status" value="1"/>
</dbReference>
<dbReference type="FunFam" id="3.40.50.300:FF:000098">
    <property type="entry name" value="Probable GTP-binding protein EngB"/>
    <property type="match status" value="1"/>
</dbReference>
<dbReference type="Gene3D" id="3.40.50.300">
    <property type="entry name" value="P-loop containing nucleotide triphosphate hydrolases"/>
    <property type="match status" value="1"/>
</dbReference>
<dbReference type="HAMAP" id="MF_00321">
    <property type="entry name" value="GTPase_EngB"/>
    <property type="match status" value="1"/>
</dbReference>
<dbReference type="InterPro" id="IPR030393">
    <property type="entry name" value="G_ENGB_dom"/>
</dbReference>
<dbReference type="InterPro" id="IPR006073">
    <property type="entry name" value="GTP-bd"/>
</dbReference>
<dbReference type="InterPro" id="IPR019987">
    <property type="entry name" value="GTP-bd_ribosome_bio_YsxC"/>
</dbReference>
<dbReference type="InterPro" id="IPR027417">
    <property type="entry name" value="P-loop_NTPase"/>
</dbReference>
<dbReference type="NCBIfam" id="TIGR03598">
    <property type="entry name" value="GTPase_YsxC"/>
    <property type="match status" value="1"/>
</dbReference>
<dbReference type="PANTHER" id="PTHR11649:SF13">
    <property type="entry name" value="ENGB-TYPE G DOMAIN-CONTAINING PROTEIN"/>
    <property type="match status" value="1"/>
</dbReference>
<dbReference type="PANTHER" id="PTHR11649">
    <property type="entry name" value="MSS1/TRME-RELATED GTP-BINDING PROTEIN"/>
    <property type="match status" value="1"/>
</dbReference>
<dbReference type="Pfam" id="PF01926">
    <property type="entry name" value="MMR_HSR1"/>
    <property type="match status" value="1"/>
</dbReference>
<dbReference type="SUPFAM" id="SSF52540">
    <property type="entry name" value="P-loop containing nucleoside triphosphate hydrolases"/>
    <property type="match status" value="1"/>
</dbReference>
<dbReference type="PROSITE" id="PS51706">
    <property type="entry name" value="G_ENGB"/>
    <property type="match status" value="1"/>
</dbReference>
<evidence type="ECO:0000255" key="1">
    <source>
        <dbReference type="HAMAP-Rule" id="MF_00321"/>
    </source>
</evidence>
<sequence>MSEIKLNYHKTHFLTSAPNIRSIPEDTGIEIAFAGRSNAGKSTALNALTNQKNLARTSKTPGRTQLINLFEVEPNYKLVDLPGYGYAAVPEQMKIQWQKSLGEYLQKRECLSGLVVLMDIRHPLKDLDQQMIEWAVSADLPILLLLTKADKLSQSARSKQVKMVREAILPFQGDIQVEAFSAQNKIGIDKLAAKLDFWFSPLFAK</sequence>